<protein>
    <recommendedName>
        <fullName evidence="1">Arginine--tRNA ligase</fullName>
        <ecNumber evidence="1">6.1.1.19</ecNumber>
    </recommendedName>
    <alternativeName>
        <fullName evidence="1">Arginyl-tRNA synthetase</fullName>
        <shortName evidence="1">ArgRS</shortName>
    </alternativeName>
</protein>
<evidence type="ECO:0000255" key="1">
    <source>
        <dbReference type="HAMAP-Rule" id="MF_00123"/>
    </source>
</evidence>
<proteinExistence type="inferred from homology"/>
<accession>Q72X85</accession>
<name>SYR_BACC1</name>
<keyword id="KW-0030">Aminoacyl-tRNA synthetase</keyword>
<keyword id="KW-0067">ATP-binding</keyword>
<keyword id="KW-0963">Cytoplasm</keyword>
<keyword id="KW-0436">Ligase</keyword>
<keyword id="KW-0547">Nucleotide-binding</keyword>
<keyword id="KW-0648">Protein biosynthesis</keyword>
<sequence length="556" mass="62459">MNSLEQVKGLIKEEIQAAVLKAELATEEQIPNVVLESPKDKTNGDFSTNMAMQLARVAKKAPRMIAEELVANFDKAKASIEKIEIAGPGFINFYMDNSYLTDLIPTIVNAGEAYGETSTGKGEKVQVEFVSANPTGDLHLGHARGAAVGDTLCNLLAKAGYDVSREYYINDAGNQIHNLALSVEARYMQALGLEKEMPEDGYHGADIIAIGKRLAEEFGDRYAKADEKESYEFYREYGLKYELAKLQKDLESFRVKFDVWFSETSLYKNGKIDQALAVLKERDEIFEEDGATWFRSMTYGDDKNRVLIKNDGSYTYLTPDIAYHRDKLERGFDKLINIWGADHHGYIPRMKAAIQALGYDKETLEVEIIQMVQLYQNGEKMKMSKRTGKAVTLRELMEEVGVDAMRYFFAMRSGDSHLDFDMDLAVSKSNENPVYYAQYAHARVCSILRQGEELGLATGGDVNYKLVTSEKEVELLKKLGEFPAVVADAAQKRLPHRITNYAFELAAALHSFYNAEKVLNQDNLELSKARYELMKAVRTTLQNALAIVGVSAPEKM</sequence>
<reference key="1">
    <citation type="journal article" date="2004" name="Nucleic Acids Res.">
        <title>The genome sequence of Bacillus cereus ATCC 10987 reveals metabolic adaptations and a large plasmid related to Bacillus anthracis pXO1.</title>
        <authorList>
            <person name="Rasko D.A."/>
            <person name="Ravel J."/>
            <person name="Oekstad O.A."/>
            <person name="Helgason E."/>
            <person name="Cer R.Z."/>
            <person name="Jiang L."/>
            <person name="Shores K.A."/>
            <person name="Fouts D.E."/>
            <person name="Tourasse N.J."/>
            <person name="Angiuoli S.V."/>
            <person name="Kolonay J.F."/>
            <person name="Nelson W.C."/>
            <person name="Kolstoe A.-B."/>
            <person name="Fraser C.M."/>
            <person name="Read T.D."/>
        </authorList>
    </citation>
    <scope>NUCLEOTIDE SEQUENCE [LARGE SCALE GENOMIC DNA]</scope>
    <source>
        <strain>ATCC 10987 / NRS 248</strain>
    </source>
</reference>
<organism>
    <name type="scientific">Bacillus cereus (strain ATCC 10987 / NRS 248)</name>
    <dbReference type="NCBI Taxonomy" id="222523"/>
    <lineage>
        <taxon>Bacteria</taxon>
        <taxon>Bacillati</taxon>
        <taxon>Bacillota</taxon>
        <taxon>Bacilli</taxon>
        <taxon>Bacillales</taxon>
        <taxon>Bacillaceae</taxon>
        <taxon>Bacillus</taxon>
        <taxon>Bacillus cereus group</taxon>
    </lineage>
</organism>
<feature type="chain" id="PRO_0000241979" description="Arginine--tRNA ligase">
    <location>
        <begin position="1"/>
        <end position="556"/>
    </location>
</feature>
<feature type="short sequence motif" description="'HIGH' region">
    <location>
        <begin position="132"/>
        <end position="142"/>
    </location>
</feature>
<comment type="catalytic activity">
    <reaction evidence="1">
        <text>tRNA(Arg) + L-arginine + ATP = L-arginyl-tRNA(Arg) + AMP + diphosphate</text>
        <dbReference type="Rhea" id="RHEA:20301"/>
        <dbReference type="Rhea" id="RHEA-COMP:9658"/>
        <dbReference type="Rhea" id="RHEA-COMP:9673"/>
        <dbReference type="ChEBI" id="CHEBI:30616"/>
        <dbReference type="ChEBI" id="CHEBI:32682"/>
        <dbReference type="ChEBI" id="CHEBI:33019"/>
        <dbReference type="ChEBI" id="CHEBI:78442"/>
        <dbReference type="ChEBI" id="CHEBI:78513"/>
        <dbReference type="ChEBI" id="CHEBI:456215"/>
        <dbReference type="EC" id="6.1.1.19"/>
    </reaction>
</comment>
<comment type="subunit">
    <text evidence="1">Monomer.</text>
</comment>
<comment type="subcellular location">
    <subcellularLocation>
        <location evidence="1">Cytoplasm</location>
    </subcellularLocation>
</comment>
<comment type="similarity">
    <text evidence="1">Belongs to the class-I aminoacyl-tRNA synthetase family.</text>
</comment>
<dbReference type="EC" id="6.1.1.19" evidence="1"/>
<dbReference type="EMBL" id="AE017194">
    <property type="protein sequence ID" value="AAS44393.1"/>
    <property type="molecule type" value="Genomic_DNA"/>
</dbReference>
<dbReference type="SMR" id="Q72X85"/>
<dbReference type="KEGG" id="bca:BCE_5493"/>
<dbReference type="HOGENOM" id="CLU_006406_0_1_9"/>
<dbReference type="Proteomes" id="UP000002527">
    <property type="component" value="Chromosome"/>
</dbReference>
<dbReference type="GO" id="GO:0005737">
    <property type="term" value="C:cytoplasm"/>
    <property type="evidence" value="ECO:0007669"/>
    <property type="project" value="UniProtKB-SubCell"/>
</dbReference>
<dbReference type="GO" id="GO:0004814">
    <property type="term" value="F:arginine-tRNA ligase activity"/>
    <property type="evidence" value="ECO:0007669"/>
    <property type="project" value="UniProtKB-UniRule"/>
</dbReference>
<dbReference type="GO" id="GO:0005524">
    <property type="term" value="F:ATP binding"/>
    <property type="evidence" value="ECO:0007669"/>
    <property type="project" value="UniProtKB-UniRule"/>
</dbReference>
<dbReference type="GO" id="GO:0006420">
    <property type="term" value="P:arginyl-tRNA aminoacylation"/>
    <property type="evidence" value="ECO:0007669"/>
    <property type="project" value="UniProtKB-UniRule"/>
</dbReference>
<dbReference type="CDD" id="cd07956">
    <property type="entry name" value="Anticodon_Ia_Arg"/>
    <property type="match status" value="1"/>
</dbReference>
<dbReference type="CDD" id="cd00671">
    <property type="entry name" value="ArgRS_core"/>
    <property type="match status" value="1"/>
</dbReference>
<dbReference type="FunFam" id="1.10.730.10:FF:000008">
    <property type="entry name" value="Arginine--tRNA ligase"/>
    <property type="match status" value="1"/>
</dbReference>
<dbReference type="FunFam" id="3.30.1360.70:FF:000003">
    <property type="entry name" value="Arginine--tRNA ligase"/>
    <property type="match status" value="1"/>
</dbReference>
<dbReference type="FunFam" id="3.40.50.620:FF:000062">
    <property type="entry name" value="Arginine--tRNA ligase"/>
    <property type="match status" value="1"/>
</dbReference>
<dbReference type="Gene3D" id="3.30.1360.70">
    <property type="entry name" value="Arginyl tRNA synthetase N-terminal domain"/>
    <property type="match status" value="1"/>
</dbReference>
<dbReference type="Gene3D" id="3.40.50.620">
    <property type="entry name" value="HUPs"/>
    <property type="match status" value="1"/>
</dbReference>
<dbReference type="Gene3D" id="1.10.730.10">
    <property type="entry name" value="Isoleucyl-tRNA Synthetase, Domain 1"/>
    <property type="match status" value="1"/>
</dbReference>
<dbReference type="HAMAP" id="MF_00123">
    <property type="entry name" value="Arg_tRNA_synth"/>
    <property type="match status" value="1"/>
</dbReference>
<dbReference type="InterPro" id="IPR001412">
    <property type="entry name" value="aa-tRNA-synth_I_CS"/>
</dbReference>
<dbReference type="InterPro" id="IPR001278">
    <property type="entry name" value="Arg-tRNA-ligase"/>
</dbReference>
<dbReference type="InterPro" id="IPR005148">
    <property type="entry name" value="Arg-tRNA-synth_N"/>
</dbReference>
<dbReference type="InterPro" id="IPR036695">
    <property type="entry name" value="Arg-tRNA-synth_N_sf"/>
</dbReference>
<dbReference type="InterPro" id="IPR035684">
    <property type="entry name" value="ArgRS_core"/>
</dbReference>
<dbReference type="InterPro" id="IPR008909">
    <property type="entry name" value="DALR_anticod-bd"/>
</dbReference>
<dbReference type="InterPro" id="IPR014729">
    <property type="entry name" value="Rossmann-like_a/b/a_fold"/>
</dbReference>
<dbReference type="InterPro" id="IPR009080">
    <property type="entry name" value="tRNAsynth_Ia_anticodon-bd"/>
</dbReference>
<dbReference type="NCBIfam" id="TIGR00456">
    <property type="entry name" value="argS"/>
    <property type="match status" value="1"/>
</dbReference>
<dbReference type="PANTHER" id="PTHR11956:SF5">
    <property type="entry name" value="ARGININE--TRNA LIGASE, CYTOPLASMIC"/>
    <property type="match status" value="1"/>
</dbReference>
<dbReference type="PANTHER" id="PTHR11956">
    <property type="entry name" value="ARGINYL-TRNA SYNTHETASE"/>
    <property type="match status" value="1"/>
</dbReference>
<dbReference type="Pfam" id="PF03485">
    <property type="entry name" value="Arg_tRNA_synt_N"/>
    <property type="match status" value="1"/>
</dbReference>
<dbReference type="Pfam" id="PF05746">
    <property type="entry name" value="DALR_1"/>
    <property type="match status" value="1"/>
</dbReference>
<dbReference type="Pfam" id="PF00750">
    <property type="entry name" value="tRNA-synt_1d"/>
    <property type="match status" value="1"/>
</dbReference>
<dbReference type="PRINTS" id="PR01038">
    <property type="entry name" value="TRNASYNTHARG"/>
</dbReference>
<dbReference type="SMART" id="SM01016">
    <property type="entry name" value="Arg_tRNA_synt_N"/>
    <property type="match status" value="1"/>
</dbReference>
<dbReference type="SMART" id="SM00836">
    <property type="entry name" value="DALR_1"/>
    <property type="match status" value="1"/>
</dbReference>
<dbReference type="SUPFAM" id="SSF47323">
    <property type="entry name" value="Anticodon-binding domain of a subclass of class I aminoacyl-tRNA synthetases"/>
    <property type="match status" value="1"/>
</dbReference>
<dbReference type="SUPFAM" id="SSF55190">
    <property type="entry name" value="Arginyl-tRNA synthetase (ArgRS), N-terminal 'additional' domain"/>
    <property type="match status" value="1"/>
</dbReference>
<dbReference type="SUPFAM" id="SSF52374">
    <property type="entry name" value="Nucleotidylyl transferase"/>
    <property type="match status" value="1"/>
</dbReference>
<dbReference type="PROSITE" id="PS00178">
    <property type="entry name" value="AA_TRNA_LIGASE_I"/>
    <property type="match status" value="1"/>
</dbReference>
<gene>
    <name evidence="1" type="primary">argS</name>
    <name type="ordered locus">BCE_5493</name>
</gene>